<protein>
    <recommendedName>
        <fullName evidence="1">UDP-3-O-acylglucosamine N-acyltransferase</fullName>
        <ecNumber evidence="1">2.3.1.191</ecNumber>
    </recommendedName>
</protein>
<feature type="chain" id="PRO_0000059657" description="UDP-3-O-acylglucosamine N-acyltransferase">
    <location>
        <begin position="1"/>
        <end position="361"/>
    </location>
</feature>
<feature type="active site" description="Proton acceptor" evidence="1">
    <location>
        <position position="253"/>
    </location>
</feature>
<keyword id="KW-0012">Acyltransferase</keyword>
<keyword id="KW-0441">Lipid A biosynthesis</keyword>
<keyword id="KW-0444">Lipid biosynthesis</keyword>
<keyword id="KW-0443">Lipid metabolism</keyword>
<keyword id="KW-1185">Reference proteome</keyword>
<keyword id="KW-0677">Repeat</keyword>
<keyword id="KW-0808">Transferase</keyword>
<organism>
    <name type="scientific">Burkholderia pseudomallei (strain K96243)</name>
    <dbReference type="NCBI Taxonomy" id="272560"/>
    <lineage>
        <taxon>Bacteria</taxon>
        <taxon>Pseudomonadati</taxon>
        <taxon>Pseudomonadota</taxon>
        <taxon>Betaproteobacteria</taxon>
        <taxon>Burkholderiales</taxon>
        <taxon>Burkholderiaceae</taxon>
        <taxon>Burkholderia</taxon>
        <taxon>pseudomallei group</taxon>
    </lineage>
</organism>
<proteinExistence type="inferred from homology"/>
<gene>
    <name evidence="1" type="primary">lpxD</name>
    <name type="ordered locus">BPSL2149</name>
</gene>
<evidence type="ECO:0000255" key="1">
    <source>
        <dbReference type="HAMAP-Rule" id="MF_00523"/>
    </source>
</evidence>
<name>LPXD_BURPS</name>
<comment type="function">
    <text evidence="1">Catalyzes the N-acylation of UDP-3-O-acylglucosamine using 3-hydroxyacyl-ACP as the acyl donor. Is involved in the biosynthesis of lipid A, a phosphorylated glycolipid that anchors the lipopolysaccharide to the outer membrane of the cell.</text>
</comment>
<comment type="catalytic activity">
    <reaction evidence="1">
        <text>a UDP-3-O-[(3R)-3-hydroxyacyl]-alpha-D-glucosamine + a (3R)-hydroxyacyl-[ACP] = a UDP-2-N,3-O-bis[(3R)-3-hydroxyacyl]-alpha-D-glucosamine + holo-[ACP] + H(+)</text>
        <dbReference type="Rhea" id="RHEA:53836"/>
        <dbReference type="Rhea" id="RHEA-COMP:9685"/>
        <dbReference type="Rhea" id="RHEA-COMP:9945"/>
        <dbReference type="ChEBI" id="CHEBI:15378"/>
        <dbReference type="ChEBI" id="CHEBI:64479"/>
        <dbReference type="ChEBI" id="CHEBI:78827"/>
        <dbReference type="ChEBI" id="CHEBI:137740"/>
        <dbReference type="ChEBI" id="CHEBI:137748"/>
        <dbReference type="EC" id="2.3.1.191"/>
    </reaction>
</comment>
<comment type="pathway">
    <text evidence="1">Bacterial outer membrane biogenesis; LPS lipid A biosynthesis.</text>
</comment>
<comment type="subunit">
    <text evidence="1">Homotrimer.</text>
</comment>
<comment type="similarity">
    <text evidence="1">Belongs to the transferase hexapeptide repeat family. LpxD subfamily.</text>
</comment>
<sequence length="361" mass="36768">MALTLEALAARFGGEIVGDGRCEVGALAPLDQAGPRQLAFLANPKYLAQVETTGAGAVLIAPGDLEKLGAAAHGRNFIVTPNPYAYFARVAQMFIDLAAPPRAAGVHPSATIDPAAQVAASAVIGPHVTVEAGAVIGERAQLDANVFVGRGTRIGDDSHLYPNVAIYHGCTLGPRAIVHSGAVIGSDGFGFAPDFVGEGDARTGAWVKIPQVGGVKVGPDVEIGANTTIDRGAMADTVIDECVKIDNLVQIGHNCRIGAYTVIAGCAGIAGSTTIGKHCMIGGAVGIAGHVTLGDYVIVTAKSGVSKSLPKAGIYTSAFPAVEHGDWNRSAALVRNLDKLRDRIKALETALAAREGDAGGA</sequence>
<dbReference type="EC" id="2.3.1.191" evidence="1"/>
<dbReference type="EMBL" id="BX571965">
    <property type="protein sequence ID" value="CAH36151.1"/>
    <property type="molecule type" value="Genomic_DNA"/>
</dbReference>
<dbReference type="RefSeq" id="WP_004521195.1">
    <property type="nucleotide sequence ID" value="NZ_CP009538.1"/>
</dbReference>
<dbReference type="RefSeq" id="YP_108744.1">
    <property type="nucleotide sequence ID" value="NC_006350.1"/>
</dbReference>
<dbReference type="SMR" id="Q63T22"/>
<dbReference type="STRING" id="272560.BPSL2149"/>
<dbReference type="KEGG" id="bps:BPSL2149"/>
<dbReference type="PATRIC" id="fig|272560.51.peg.3304"/>
<dbReference type="eggNOG" id="COG1044">
    <property type="taxonomic scope" value="Bacteria"/>
</dbReference>
<dbReference type="UniPathway" id="UPA00973"/>
<dbReference type="Proteomes" id="UP000000605">
    <property type="component" value="Chromosome 1"/>
</dbReference>
<dbReference type="GO" id="GO:0016020">
    <property type="term" value="C:membrane"/>
    <property type="evidence" value="ECO:0007669"/>
    <property type="project" value="GOC"/>
</dbReference>
<dbReference type="GO" id="GO:0016410">
    <property type="term" value="F:N-acyltransferase activity"/>
    <property type="evidence" value="ECO:0007669"/>
    <property type="project" value="InterPro"/>
</dbReference>
<dbReference type="GO" id="GO:0009245">
    <property type="term" value="P:lipid A biosynthetic process"/>
    <property type="evidence" value="ECO:0007669"/>
    <property type="project" value="UniProtKB-UniRule"/>
</dbReference>
<dbReference type="CDD" id="cd03352">
    <property type="entry name" value="LbH_LpxD"/>
    <property type="match status" value="1"/>
</dbReference>
<dbReference type="Gene3D" id="1.20.5.170">
    <property type="match status" value="1"/>
</dbReference>
<dbReference type="Gene3D" id="2.160.10.10">
    <property type="entry name" value="Hexapeptide repeat proteins"/>
    <property type="match status" value="1"/>
</dbReference>
<dbReference type="Gene3D" id="3.40.1390.10">
    <property type="entry name" value="MurE/MurF, N-terminal domain"/>
    <property type="match status" value="1"/>
</dbReference>
<dbReference type="HAMAP" id="MF_00523">
    <property type="entry name" value="LpxD"/>
    <property type="match status" value="1"/>
</dbReference>
<dbReference type="InterPro" id="IPR001451">
    <property type="entry name" value="Hexapep"/>
</dbReference>
<dbReference type="InterPro" id="IPR018357">
    <property type="entry name" value="Hexapep_transf_CS"/>
</dbReference>
<dbReference type="InterPro" id="IPR007691">
    <property type="entry name" value="LpxD"/>
</dbReference>
<dbReference type="InterPro" id="IPR011004">
    <property type="entry name" value="Trimer_LpxA-like_sf"/>
</dbReference>
<dbReference type="InterPro" id="IPR020573">
    <property type="entry name" value="UDP_GlcNAc_AcTrfase_non-rep"/>
</dbReference>
<dbReference type="NCBIfam" id="TIGR01853">
    <property type="entry name" value="lipid_A_lpxD"/>
    <property type="match status" value="1"/>
</dbReference>
<dbReference type="NCBIfam" id="NF002060">
    <property type="entry name" value="PRK00892.1"/>
    <property type="match status" value="1"/>
</dbReference>
<dbReference type="PANTHER" id="PTHR43378">
    <property type="entry name" value="UDP-3-O-ACYLGLUCOSAMINE N-ACYLTRANSFERASE"/>
    <property type="match status" value="1"/>
</dbReference>
<dbReference type="PANTHER" id="PTHR43378:SF2">
    <property type="entry name" value="UDP-3-O-ACYLGLUCOSAMINE N-ACYLTRANSFERASE 1, MITOCHONDRIAL-RELATED"/>
    <property type="match status" value="1"/>
</dbReference>
<dbReference type="Pfam" id="PF00132">
    <property type="entry name" value="Hexapep"/>
    <property type="match status" value="2"/>
</dbReference>
<dbReference type="Pfam" id="PF14602">
    <property type="entry name" value="Hexapep_2"/>
    <property type="match status" value="1"/>
</dbReference>
<dbReference type="Pfam" id="PF04613">
    <property type="entry name" value="LpxD"/>
    <property type="match status" value="1"/>
</dbReference>
<dbReference type="SUPFAM" id="SSF51161">
    <property type="entry name" value="Trimeric LpxA-like enzymes"/>
    <property type="match status" value="1"/>
</dbReference>
<dbReference type="PROSITE" id="PS00101">
    <property type="entry name" value="HEXAPEP_TRANSFERASES"/>
    <property type="match status" value="3"/>
</dbReference>
<reference key="1">
    <citation type="journal article" date="2004" name="Proc. Natl. Acad. Sci. U.S.A.">
        <title>Genomic plasticity of the causative agent of melioidosis, Burkholderia pseudomallei.</title>
        <authorList>
            <person name="Holden M.T.G."/>
            <person name="Titball R.W."/>
            <person name="Peacock S.J."/>
            <person name="Cerdeno-Tarraga A.-M."/>
            <person name="Atkins T."/>
            <person name="Crossman L.C."/>
            <person name="Pitt T."/>
            <person name="Churcher C."/>
            <person name="Mungall K.L."/>
            <person name="Bentley S.D."/>
            <person name="Sebaihia M."/>
            <person name="Thomson N.R."/>
            <person name="Bason N."/>
            <person name="Beacham I.R."/>
            <person name="Brooks K."/>
            <person name="Brown K.A."/>
            <person name="Brown N.F."/>
            <person name="Challis G.L."/>
            <person name="Cherevach I."/>
            <person name="Chillingworth T."/>
            <person name="Cronin A."/>
            <person name="Crossett B."/>
            <person name="Davis P."/>
            <person name="DeShazer D."/>
            <person name="Feltwell T."/>
            <person name="Fraser A."/>
            <person name="Hance Z."/>
            <person name="Hauser H."/>
            <person name="Holroyd S."/>
            <person name="Jagels K."/>
            <person name="Keith K.E."/>
            <person name="Maddison M."/>
            <person name="Moule S."/>
            <person name="Price C."/>
            <person name="Quail M.A."/>
            <person name="Rabbinowitsch E."/>
            <person name="Rutherford K."/>
            <person name="Sanders M."/>
            <person name="Simmonds M."/>
            <person name="Songsivilai S."/>
            <person name="Stevens K."/>
            <person name="Tumapa S."/>
            <person name="Vesaratchavest M."/>
            <person name="Whitehead S."/>
            <person name="Yeats C."/>
            <person name="Barrell B.G."/>
            <person name="Oyston P.C.F."/>
            <person name="Parkhill J."/>
        </authorList>
    </citation>
    <scope>NUCLEOTIDE SEQUENCE [LARGE SCALE GENOMIC DNA]</scope>
    <source>
        <strain>K96243</strain>
    </source>
</reference>
<accession>Q63T22</accession>